<name>MLTF1_ALKEH</name>
<dbReference type="EC" id="4.2.2.n1" evidence="1"/>
<dbReference type="EMBL" id="CP000453">
    <property type="protein sequence ID" value="ABI56371.1"/>
    <property type="molecule type" value="Genomic_DNA"/>
</dbReference>
<dbReference type="RefSeq" id="WP_011628766.1">
    <property type="nucleotide sequence ID" value="NC_008340.1"/>
</dbReference>
<dbReference type="SMR" id="Q0A9W6"/>
<dbReference type="CAZy" id="GH23">
    <property type="family name" value="Glycoside Hydrolase Family 23"/>
</dbReference>
<dbReference type="KEGG" id="aeh:Mlg_1018"/>
<dbReference type="eggNOG" id="COG4623">
    <property type="taxonomic scope" value="Bacteria"/>
</dbReference>
<dbReference type="HOGENOM" id="CLU_027494_0_1_6"/>
<dbReference type="OrthoDB" id="9815002at2"/>
<dbReference type="Proteomes" id="UP000001962">
    <property type="component" value="Chromosome"/>
</dbReference>
<dbReference type="GO" id="GO:0009279">
    <property type="term" value="C:cell outer membrane"/>
    <property type="evidence" value="ECO:0007669"/>
    <property type="project" value="UniProtKB-SubCell"/>
</dbReference>
<dbReference type="GO" id="GO:0008933">
    <property type="term" value="F:peptidoglycan lytic transglycosylase activity"/>
    <property type="evidence" value="ECO:0007669"/>
    <property type="project" value="UniProtKB-UniRule"/>
</dbReference>
<dbReference type="GO" id="GO:0016998">
    <property type="term" value="P:cell wall macromolecule catabolic process"/>
    <property type="evidence" value="ECO:0007669"/>
    <property type="project" value="UniProtKB-UniRule"/>
</dbReference>
<dbReference type="GO" id="GO:0071555">
    <property type="term" value="P:cell wall organization"/>
    <property type="evidence" value="ECO:0007669"/>
    <property type="project" value="UniProtKB-KW"/>
</dbReference>
<dbReference type="GO" id="GO:0009253">
    <property type="term" value="P:peptidoglycan catabolic process"/>
    <property type="evidence" value="ECO:0007669"/>
    <property type="project" value="TreeGrafter"/>
</dbReference>
<dbReference type="CDD" id="cd13403">
    <property type="entry name" value="MLTF-like"/>
    <property type="match status" value="1"/>
</dbReference>
<dbReference type="CDD" id="cd01009">
    <property type="entry name" value="PBP2_YfhD_N"/>
    <property type="match status" value="1"/>
</dbReference>
<dbReference type="Gene3D" id="1.10.530.10">
    <property type="match status" value="1"/>
</dbReference>
<dbReference type="Gene3D" id="3.40.190.10">
    <property type="entry name" value="Periplasmic binding protein-like II"/>
    <property type="match status" value="2"/>
</dbReference>
<dbReference type="HAMAP" id="MF_02016">
    <property type="entry name" value="MltF"/>
    <property type="match status" value="1"/>
</dbReference>
<dbReference type="InterPro" id="IPR023346">
    <property type="entry name" value="Lysozyme-like_dom_sf"/>
</dbReference>
<dbReference type="InterPro" id="IPR023703">
    <property type="entry name" value="MltF"/>
</dbReference>
<dbReference type="InterPro" id="IPR001638">
    <property type="entry name" value="Solute-binding_3/MltF_N"/>
</dbReference>
<dbReference type="InterPro" id="IPR000189">
    <property type="entry name" value="Transglyc_AS"/>
</dbReference>
<dbReference type="InterPro" id="IPR008258">
    <property type="entry name" value="Transglycosylase_SLT_dom_1"/>
</dbReference>
<dbReference type="NCBIfam" id="NF008112">
    <property type="entry name" value="PRK10859.1"/>
    <property type="match status" value="1"/>
</dbReference>
<dbReference type="PANTHER" id="PTHR35936">
    <property type="entry name" value="MEMBRANE-BOUND LYTIC MUREIN TRANSGLYCOSYLASE F"/>
    <property type="match status" value="1"/>
</dbReference>
<dbReference type="PANTHER" id="PTHR35936:SF32">
    <property type="entry name" value="MEMBRANE-BOUND LYTIC MUREIN TRANSGLYCOSYLASE F"/>
    <property type="match status" value="1"/>
</dbReference>
<dbReference type="Pfam" id="PF00497">
    <property type="entry name" value="SBP_bac_3"/>
    <property type="match status" value="1"/>
</dbReference>
<dbReference type="Pfam" id="PF01464">
    <property type="entry name" value="SLT"/>
    <property type="match status" value="1"/>
</dbReference>
<dbReference type="SMART" id="SM00062">
    <property type="entry name" value="PBPb"/>
    <property type="match status" value="1"/>
</dbReference>
<dbReference type="SUPFAM" id="SSF53955">
    <property type="entry name" value="Lysozyme-like"/>
    <property type="match status" value="1"/>
</dbReference>
<dbReference type="SUPFAM" id="SSF53850">
    <property type="entry name" value="Periplasmic binding protein-like II"/>
    <property type="match status" value="1"/>
</dbReference>
<dbReference type="PROSITE" id="PS00922">
    <property type="entry name" value="TRANSGLYCOSYLASE"/>
    <property type="match status" value="1"/>
</dbReference>
<organism>
    <name type="scientific">Alkalilimnicola ehrlichii (strain ATCC BAA-1101 / DSM 17681 / MLHE-1)</name>
    <dbReference type="NCBI Taxonomy" id="187272"/>
    <lineage>
        <taxon>Bacteria</taxon>
        <taxon>Pseudomonadati</taxon>
        <taxon>Pseudomonadota</taxon>
        <taxon>Gammaproteobacteria</taxon>
        <taxon>Chromatiales</taxon>
        <taxon>Ectothiorhodospiraceae</taxon>
        <taxon>Alkalilimnicola</taxon>
    </lineage>
</organism>
<sequence length="494" mass="56647">MRIMAVRLVAGAITLALMAYAWLAWERARDPEPITILERVLERGELRVITRISATTYYQTDKGRAGLEFELAQAFAHRLGVQLRMLVAPDLEAIFAALDDGEADLAAAGLTYTESRGQRYWFTPPYKDITQQLVYRVGTPRPDDLSEIGPGELAVIANSSHADRLRELRNRSHPDLTWAEDEHADSEAMLYRVWNEELRYTVADSHELSINRAYYPELRKAFEISGVEGLAWAFPRTEDLSLYNEAARYFTDLRLEGTLSTLLEEHFGHLGRFDYVGFRAFNRHVADRLPRYRHWFEEAAEEYGVDWRLLAAIGYQESHWDPQAVSPTGVRGIMMLTLDTASMLGVDNRLDPKQSIFGGARYFSRLLERLPEDIEEPHRAWMALAAYNVGYGHLQDARRLARQRGYDPNDWRVIRDHLPLLSQRQWYVQTRHGYARGWEPVHYVRNIRLYYQLLQRITEPGRRQVPAGEALGEPPLPTPPAPPGAPLPADPPAD</sequence>
<evidence type="ECO:0000255" key="1">
    <source>
        <dbReference type="HAMAP-Rule" id="MF_02016"/>
    </source>
</evidence>
<evidence type="ECO:0000256" key="2">
    <source>
        <dbReference type="SAM" id="MobiDB-lite"/>
    </source>
</evidence>
<comment type="function">
    <text evidence="1">Murein-degrading enzyme that degrades murein glycan strands and insoluble, high-molecular weight murein sacculi, with the concomitant formation of a 1,6-anhydromuramoyl product. Lytic transglycosylases (LTs) play an integral role in the metabolism of the peptidoglycan (PG) sacculus. Their lytic action creates space within the PG sacculus to allow for its expansion as well as for the insertion of various structures such as secretion systems and flagella.</text>
</comment>
<comment type="catalytic activity">
    <reaction evidence="1">
        <text>Exolytic cleavage of the (1-&gt;4)-beta-glycosidic linkage between N-acetylmuramic acid (MurNAc) and N-acetylglucosamine (GlcNAc) residues in peptidoglycan, from either the reducing or the non-reducing ends of the peptidoglycan chains, with concomitant formation of a 1,6-anhydrobond in the MurNAc residue.</text>
        <dbReference type="EC" id="4.2.2.n1"/>
    </reaction>
</comment>
<comment type="subcellular location">
    <subcellularLocation>
        <location>Cell outer membrane</location>
        <topology>Peripheral membrane protein</topology>
    </subcellularLocation>
    <text evidence="1">Attached to the inner leaflet of the outer membrane.</text>
</comment>
<comment type="domain">
    <text evidence="1">The N-terminal domain does not have lytic activity and probably modulates enzymatic activity. The C-terminal domain is the catalytic active domain.</text>
</comment>
<comment type="similarity">
    <text evidence="1">In the N-terminal section; belongs to the bacterial solute-binding protein 3 family.</text>
</comment>
<comment type="similarity">
    <text evidence="1">In the C-terminal section; belongs to the transglycosylase Slt family.</text>
</comment>
<proteinExistence type="inferred from homology"/>
<gene>
    <name evidence="1" type="primary">mltF1</name>
    <name type="ordered locus">Mlg_1018</name>
</gene>
<keyword id="KW-0998">Cell outer membrane</keyword>
<keyword id="KW-0961">Cell wall biogenesis/degradation</keyword>
<keyword id="KW-0456">Lyase</keyword>
<keyword id="KW-0472">Membrane</keyword>
<keyword id="KW-1185">Reference proteome</keyword>
<keyword id="KW-0732">Signal</keyword>
<protein>
    <recommendedName>
        <fullName evidence="1">Membrane-bound lytic murein transglycosylase F 1</fullName>
        <ecNumber evidence="1">4.2.2.n1</ecNumber>
    </recommendedName>
    <alternativeName>
        <fullName evidence="1">Murein lyase F 1</fullName>
    </alternativeName>
</protein>
<feature type="signal peptide" evidence="1">
    <location>
        <begin position="1"/>
        <end position="24"/>
    </location>
</feature>
<feature type="chain" id="PRO_5000132775" description="Membrane-bound lytic murein transglycosylase F 1">
    <location>
        <begin position="25"/>
        <end position="494"/>
    </location>
</feature>
<feature type="region of interest" description="Non-LT domain" evidence="1">
    <location>
        <begin position="25"/>
        <end position="270"/>
    </location>
</feature>
<feature type="region of interest" description="LT domain" evidence="1">
    <location>
        <begin position="271"/>
        <end position="494"/>
    </location>
</feature>
<feature type="region of interest" description="Disordered" evidence="2">
    <location>
        <begin position="464"/>
        <end position="494"/>
    </location>
</feature>
<feature type="compositionally biased region" description="Pro residues" evidence="2">
    <location>
        <begin position="474"/>
        <end position="494"/>
    </location>
</feature>
<feature type="active site" evidence="1">
    <location>
        <position position="317"/>
    </location>
</feature>
<accession>Q0A9W6</accession>
<reference key="1">
    <citation type="submission" date="2006-08" db="EMBL/GenBank/DDBJ databases">
        <title>Complete sequence of Alkalilimnicola ehrilichei MLHE-1.</title>
        <authorList>
            <person name="Copeland A."/>
            <person name="Lucas S."/>
            <person name="Lapidus A."/>
            <person name="Barry K."/>
            <person name="Detter J.C."/>
            <person name="Glavina del Rio T."/>
            <person name="Hammon N."/>
            <person name="Israni S."/>
            <person name="Dalin E."/>
            <person name="Tice H."/>
            <person name="Pitluck S."/>
            <person name="Sims D."/>
            <person name="Brettin T."/>
            <person name="Bruce D."/>
            <person name="Han C."/>
            <person name="Tapia R."/>
            <person name="Gilna P."/>
            <person name="Schmutz J."/>
            <person name="Larimer F."/>
            <person name="Land M."/>
            <person name="Hauser L."/>
            <person name="Kyrpides N."/>
            <person name="Mikhailova N."/>
            <person name="Oremland R.S."/>
            <person name="Hoeft S.E."/>
            <person name="Switzer-Blum J."/>
            <person name="Kulp T."/>
            <person name="King G."/>
            <person name="Tabita R."/>
            <person name="Witte B."/>
            <person name="Santini J.M."/>
            <person name="Basu P."/>
            <person name="Hollibaugh J.T."/>
            <person name="Xie G."/>
            <person name="Stolz J.F."/>
            <person name="Richardson P."/>
        </authorList>
    </citation>
    <scope>NUCLEOTIDE SEQUENCE [LARGE SCALE GENOMIC DNA]</scope>
    <source>
        <strain>ATCC BAA-1101 / DSM 17681 / MLHE-1</strain>
    </source>
</reference>